<accession>Q6APV7</accession>
<keyword id="KW-1185">Reference proteome</keyword>
<gene>
    <name evidence="1" type="primary">clpS</name>
    <name type="ordered locus">DP0887</name>
</gene>
<comment type="function">
    <text evidence="1">Involved in the modulation of the specificity of the ClpAP-mediated ATP-dependent protein degradation.</text>
</comment>
<comment type="subunit">
    <text evidence="1">Binds to the N-terminal domain of the chaperone ClpA.</text>
</comment>
<comment type="similarity">
    <text evidence="1">Belongs to the ClpS family.</text>
</comment>
<evidence type="ECO:0000255" key="1">
    <source>
        <dbReference type="HAMAP-Rule" id="MF_00302"/>
    </source>
</evidence>
<name>CLPS_DESPS</name>
<sequence length="102" mass="11573">MTEDKQQSDSATIDDIETREPPMYRVLIHNDDYTSMDFVVAILMQIFSKTEAVAEEIMLTVHSSEVGVAGLYTHEIAETKVAIVHQLAEQNEFPLRCSLEKE</sequence>
<organism>
    <name type="scientific">Desulfotalea psychrophila (strain LSv54 / DSM 12343)</name>
    <dbReference type="NCBI Taxonomy" id="177439"/>
    <lineage>
        <taxon>Bacteria</taxon>
        <taxon>Pseudomonadati</taxon>
        <taxon>Thermodesulfobacteriota</taxon>
        <taxon>Desulfobulbia</taxon>
        <taxon>Desulfobulbales</taxon>
        <taxon>Desulfocapsaceae</taxon>
        <taxon>Desulfotalea</taxon>
    </lineage>
</organism>
<protein>
    <recommendedName>
        <fullName evidence="1">ATP-dependent Clp protease adapter protein ClpS</fullName>
    </recommendedName>
</protein>
<proteinExistence type="inferred from homology"/>
<reference key="1">
    <citation type="journal article" date="2004" name="Environ. Microbiol.">
        <title>The genome of Desulfotalea psychrophila, a sulfate-reducing bacterium from permanently cold Arctic sediments.</title>
        <authorList>
            <person name="Rabus R."/>
            <person name="Ruepp A."/>
            <person name="Frickey T."/>
            <person name="Rattei T."/>
            <person name="Fartmann B."/>
            <person name="Stark M."/>
            <person name="Bauer M."/>
            <person name="Zibat A."/>
            <person name="Lombardot T."/>
            <person name="Becker I."/>
            <person name="Amann J."/>
            <person name="Gellner K."/>
            <person name="Teeling H."/>
            <person name="Leuschner W.D."/>
            <person name="Gloeckner F.-O."/>
            <person name="Lupas A.N."/>
            <person name="Amann R."/>
            <person name="Klenk H.-P."/>
        </authorList>
    </citation>
    <scope>NUCLEOTIDE SEQUENCE [LARGE SCALE GENOMIC DNA]</scope>
    <source>
        <strain>DSM 12343 / LSv54</strain>
    </source>
</reference>
<feature type="chain" id="PRO_0000215705" description="ATP-dependent Clp protease adapter protein ClpS">
    <location>
        <begin position="1"/>
        <end position="102"/>
    </location>
</feature>
<dbReference type="EMBL" id="CR522870">
    <property type="protein sequence ID" value="CAG35616.1"/>
    <property type="molecule type" value="Genomic_DNA"/>
</dbReference>
<dbReference type="RefSeq" id="WP_011188130.1">
    <property type="nucleotide sequence ID" value="NC_006138.1"/>
</dbReference>
<dbReference type="SMR" id="Q6APV7"/>
<dbReference type="STRING" id="177439.DP0887"/>
<dbReference type="KEGG" id="dps:DP0887"/>
<dbReference type="eggNOG" id="COG2127">
    <property type="taxonomic scope" value="Bacteria"/>
</dbReference>
<dbReference type="HOGENOM" id="CLU_134358_1_0_7"/>
<dbReference type="OrthoDB" id="9796121at2"/>
<dbReference type="Proteomes" id="UP000000602">
    <property type="component" value="Chromosome"/>
</dbReference>
<dbReference type="GO" id="GO:0030163">
    <property type="term" value="P:protein catabolic process"/>
    <property type="evidence" value="ECO:0007669"/>
    <property type="project" value="InterPro"/>
</dbReference>
<dbReference type="GO" id="GO:0006508">
    <property type="term" value="P:proteolysis"/>
    <property type="evidence" value="ECO:0007669"/>
    <property type="project" value="UniProtKB-UniRule"/>
</dbReference>
<dbReference type="FunFam" id="3.30.1390.10:FF:000002">
    <property type="entry name" value="ATP-dependent Clp protease adapter protein ClpS"/>
    <property type="match status" value="1"/>
</dbReference>
<dbReference type="Gene3D" id="3.30.1390.10">
    <property type="match status" value="1"/>
</dbReference>
<dbReference type="HAMAP" id="MF_00302">
    <property type="entry name" value="ClpS"/>
    <property type="match status" value="1"/>
</dbReference>
<dbReference type="InterPro" id="IPR022935">
    <property type="entry name" value="ClpS"/>
</dbReference>
<dbReference type="InterPro" id="IPR003769">
    <property type="entry name" value="ClpS_core"/>
</dbReference>
<dbReference type="InterPro" id="IPR014719">
    <property type="entry name" value="Ribosomal_bL12_C/ClpS-like"/>
</dbReference>
<dbReference type="PANTHER" id="PTHR33473:SF19">
    <property type="entry name" value="ATP-DEPENDENT CLP PROTEASE ADAPTER PROTEIN CLPS"/>
    <property type="match status" value="1"/>
</dbReference>
<dbReference type="PANTHER" id="PTHR33473">
    <property type="entry name" value="ATP-DEPENDENT CLP PROTEASE ADAPTER PROTEIN CLPS1, CHLOROPLASTIC"/>
    <property type="match status" value="1"/>
</dbReference>
<dbReference type="Pfam" id="PF02617">
    <property type="entry name" value="ClpS"/>
    <property type="match status" value="1"/>
</dbReference>
<dbReference type="SUPFAM" id="SSF54736">
    <property type="entry name" value="ClpS-like"/>
    <property type="match status" value="1"/>
</dbReference>